<protein>
    <recommendedName>
        <fullName>Probable Histone-lysine N-methyltransferase ATXR5</fullName>
        <ecNumber evidence="2">2.1.1.369</ecNumber>
    </recommendedName>
</protein>
<evidence type="ECO:0000250" key="1"/>
<evidence type="ECO:0000250" key="2">
    <source>
        <dbReference type="UniProtKB" id="Q8VZJ1"/>
    </source>
</evidence>
<evidence type="ECO:0000255" key="3"/>
<evidence type="ECO:0000255" key="4">
    <source>
        <dbReference type="PROSITE-ProRule" id="PRU00146"/>
    </source>
</evidence>
<evidence type="ECO:0000255" key="5">
    <source>
        <dbReference type="PROSITE-ProRule" id="PRU00190"/>
    </source>
</evidence>
<evidence type="ECO:0000256" key="6">
    <source>
        <dbReference type="SAM" id="MobiDB-lite"/>
    </source>
</evidence>
<evidence type="ECO:0000269" key="7">
    <source>
    </source>
</evidence>
<evidence type="ECO:0007829" key="8">
    <source>
        <dbReference type="PDB" id="4O30"/>
    </source>
</evidence>
<evidence type="ECO:0007829" key="9">
    <source>
        <dbReference type="PDB" id="5VAC"/>
    </source>
</evidence>
<feature type="transit peptide" description="Chloroplast" evidence="3">
    <location>
        <begin position="1"/>
        <end position="46"/>
    </location>
</feature>
<feature type="chain" id="PRO_0000429174" description="Probable Histone-lysine N-methyltransferase ATXR5">
    <location>
        <begin position="47"/>
        <end position="374"/>
    </location>
</feature>
<feature type="domain" description="SET" evidence="5">
    <location>
        <begin position="240"/>
        <end position="362"/>
    </location>
</feature>
<feature type="zinc finger region" description="PHD-type" evidence="4">
    <location>
        <begin position="59"/>
        <end position="109"/>
    </location>
</feature>
<feature type="region of interest" description="Disordered" evidence="6">
    <location>
        <begin position="16"/>
        <end position="38"/>
    </location>
</feature>
<feature type="binding site">
    <location>
        <position position="216"/>
    </location>
    <ligand>
        <name>substrate</name>
    </ligand>
</feature>
<feature type="binding site">
    <location>
        <begin position="250"/>
        <end position="252"/>
    </location>
    <ligand>
        <name>S-adenosyl-L-methionine</name>
        <dbReference type="ChEBI" id="CHEBI:59789"/>
    </ligand>
</feature>
<feature type="binding site">
    <location>
        <begin position="312"/>
        <end position="316"/>
    </location>
    <ligand>
        <name>S-adenosyl-L-methionine</name>
        <dbReference type="ChEBI" id="CHEBI:59789"/>
    </ligand>
</feature>
<feature type="binding site">
    <location>
        <position position="334"/>
    </location>
    <ligand>
        <name>substrate</name>
    </ligand>
</feature>
<feature type="binding site">
    <location>
        <begin position="364"/>
        <end position="365"/>
    </location>
    <ligand>
        <name>substrate</name>
    </ligand>
</feature>
<feature type="binding site" evidence="5 7">
    <location>
        <position position="368"/>
    </location>
    <ligand>
        <name>S-adenosyl-L-methionine</name>
        <dbReference type="ChEBI" id="CHEBI:59789"/>
    </ligand>
</feature>
<feature type="binding site" evidence="5 7">
    <location>
        <position position="374"/>
    </location>
    <ligand>
        <name>S-adenosyl-L-methionine</name>
        <dbReference type="ChEBI" id="CHEBI:59789"/>
    </ligand>
</feature>
<feature type="helix" evidence="9">
    <location>
        <begin position="170"/>
        <end position="186"/>
    </location>
</feature>
<feature type="strand" evidence="8">
    <location>
        <begin position="193"/>
        <end position="196"/>
    </location>
</feature>
<feature type="turn" evidence="9">
    <location>
        <begin position="199"/>
        <end position="201"/>
    </location>
</feature>
<feature type="helix" evidence="9">
    <location>
        <begin position="204"/>
        <end position="206"/>
    </location>
</feature>
<feature type="helix" evidence="9">
    <location>
        <begin position="209"/>
        <end position="211"/>
    </location>
</feature>
<feature type="helix" evidence="9">
    <location>
        <begin position="221"/>
        <end position="236"/>
    </location>
</feature>
<feature type="strand" evidence="9">
    <location>
        <begin position="241"/>
        <end position="247"/>
    </location>
</feature>
<feature type="turn" evidence="9">
    <location>
        <begin position="248"/>
        <end position="250"/>
    </location>
</feature>
<feature type="strand" evidence="9">
    <location>
        <begin position="251"/>
        <end position="258"/>
    </location>
</feature>
<feature type="strand" evidence="9">
    <location>
        <begin position="264"/>
        <end position="268"/>
    </location>
</feature>
<feature type="strand" evidence="9">
    <location>
        <begin position="271"/>
        <end position="275"/>
    </location>
</feature>
<feature type="helix" evidence="9">
    <location>
        <begin position="276"/>
        <end position="278"/>
    </location>
</feature>
<feature type="strand" evidence="9">
    <location>
        <begin position="287"/>
        <end position="291"/>
    </location>
</feature>
<feature type="strand" evidence="9">
    <location>
        <begin position="293"/>
        <end position="295"/>
    </location>
</feature>
<feature type="helix" evidence="9">
    <location>
        <begin position="296"/>
        <end position="298"/>
    </location>
</feature>
<feature type="strand" evidence="9">
    <location>
        <begin position="300"/>
        <end position="303"/>
    </location>
</feature>
<feature type="strand" evidence="9">
    <location>
        <begin position="305"/>
        <end position="308"/>
    </location>
</feature>
<feature type="helix" evidence="9">
    <location>
        <begin position="310"/>
        <end position="313"/>
    </location>
</feature>
<feature type="strand" evidence="8">
    <location>
        <begin position="319"/>
        <end position="323"/>
    </location>
</feature>
<feature type="helix" evidence="9">
    <location>
        <begin position="324"/>
        <end position="327"/>
    </location>
</feature>
<feature type="strand" evidence="9">
    <location>
        <begin position="330"/>
        <end position="337"/>
    </location>
</feature>
<feature type="strand" evidence="9">
    <location>
        <begin position="340"/>
        <end position="349"/>
    </location>
</feature>
<feature type="strand" evidence="9">
    <location>
        <begin position="362"/>
        <end position="364"/>
    </location>
</feature>
<gene>
    <name type="primary">ATXR5</name>
    <name type="ORF">RCOM_1460410</name>
</gene>
<dbReference type="EC" id="2.1.1.369" evidence="2"/>
<dbReference type="EMBL" id="EQ973815">
    <property type="protein sequence ID" value="EEF45134.1"/>
    <property type="molecule type" value="Genomic_DNA"/>
</dbReference>
<dbReference type="PDB" id="4O30">
    <property type="method" value="X-ray"/>
    <property type="resolution" value="2.10 A"/>
    <property type="chains" value="A/B=146-374"/>
</dbReference>
<dbReference type="PDB" id="5VA6">
    <property type="method" value="X-ray"/>
    <property type="resolution" value="2.40 A"/>
    <property type="chains" value="A/B=146-374"/>
</dbReference>
<dbReference type="PDB" id="5VAC">
    <property type="method" value="X-ray"/>
    <property type="resolution" value="1.95 A"/>
    <property type="chains" value="A=146-374"/>
</dbReference>
<dbReference type="PDB" id="5VAH">
    <property type="method" value="X-ray"/>
    <property type="resolution" value="2.40 A"/>
    <property type="chains" value="A/B=146-374"/>
</dbReference>
<dbReference type="PDB" id="5VBC">
    <property type="method" value="X-ray"/>
    <property type="resolution" value="2.10 A"/>
    <property type="chains" value="A/B=146-374"/>
</dbReference>
<dbReference type="PDBsum" id="4O30"/>
<dbReference type="PDBsum" id="5VA6"/>
<dbReference type="PDBsum" id="5VAC"/>
<dbReference type="PDBsum" id="5VAH"/>
<dbReference type="PDBsum" id="5VBC"/>
<dbReference type="SMR" id="B9RU15"/>
<dbReference type="DIP" id="DIP-61672N"/>
<dbReference type="FunCoup" id="B9RU15">
    <property type="interactions" value="57"/>
</dbReference>
<dbReference type="STRING" id="3988.B9RU15"/>
<dbReference type="GeneID" id="8259125"/>
<dbReference type="KEGG" id="rcu:8259125"/>
<dbReference type="eggNOG" id="KOG1083">
    <property type="taxonomic scope" value="Eukaryota"/>
</dbReference>
<dbReference type="InParanoid" id="B9RU15"/>
<dbReference type="OMA" id="MYKRGEC"/>
<dbReference type="OrthoDB" id="336088at2759"/>
<dbReference type="BRENDA" id="2.1.1.369">
    <property type="organism ID" value="1204"/>
</dbReference>
<dbReference type="EvolutionaryTrace" id="B9RU15"/>
<dbReference type="Proteomes" id="UP000008311">
    <property type="component" value="Unassembled WGS sequence"/>
</dbReference>
<dbReference type="GO" id="GO:0009507">
    <property type="term" value="C:chloroplast"/>
    <property type="evidence" value="ECO:0007669"/>
    <property type="project" value="UniProtKB-SubCell"/>
</dbReference>
<dbReference type="GO" id="GO:0000785">
    <property type="term" value="C:chromatin"/>
    <property type="evidence" value="ECO:0000318"/>
    <property type="project" value="GO_Central"/>
</dbReference>
<dbReference type="GO" id="GO:0005634">
    <property type="term" value="C:nucleus"/>
    <property type="evidence" value="ECO:0000318"/>
    <property type="project" value="GO_Central"/>
</dbReference>
<dbReference type="GO" id="GO:0003682">
    <property type="term" value="F:chromatin binding"/>
    <property type="evidence" value="ECO:0000318"/>
    <property type="project" value="GO_Central"/>
</dbReference>
<dbReference type="GO" id="GO:0004402">
    <property type="term" value="F:histone acetyltransferase activity"/>
    <property type="evidence" value="ECO:0000318"/>
    <property type="project" value="GO_Central"/>
</dbReference>
<dbReference type="GO" id="GO:0140953">
    <property type="term" value="F:histone H3K27 monomethyltransferase activity"/>
    <property type="evidence" value="ECO:0007669"/>
    <property type="project" value="UniProtKB-EC"/>
</dbReference>
<dbReference type="GO" id="GO:0003712">
    <property type="term" value="F:transcription coregulator activity"/>
    <property type="evidence" value="ECO:0000318"/>
    <property type="project" value="GO_Central"/>
</dbReference>
<dbReference type="GO" id="GO:0008270">
    <property type="term" value="F:zinc ion binding"/>
    <property type="evidence" value="ECO:0007669"/>
    <property type="project" value="UniProtKB-KW"/>
</dbReference>
<dbReference type="GO" id="GO:0032259">
    <property type="term" value="P:methylation"/>
    <property type="evidence" value="ECO:0007669"/>
    <property type="project" value="UniProtKB-KW"/>
</dbReference>
<dbReference type="GO" id="GO:0006357">
    <property type="term" value="P:regulation of transcription by RNA polymerase II"/>
    <property type="evidence" value="ECO:0000318"/>
    <property type="project" value="GO_Central"/>
</dbReference>
<dbReference type="CDD" id="cd10539">
    <property type="entry name" value="SET_ATXR5_6-like"/>
    <property type="match status" value="1"/>
</dbReference>
<dbReference type="FunFam" id="2.170.270.10:FF:000038">
    <property type="entry name" value="Histone-lysine N-methyltransferase ATXR5"/>
    <property type="match status" value="1"/>
</dbReference>
<dbReference type="Gene3D" id="2.170.270.10">
    <property type="entry name" value="SET domain"/>
    <property type="match status" value="1"/>
</dbReference>
<dbReference type="Gene3D" id="3.30.40.10">
    <property type="entry name" value="Zinc/RING finger domain, C3HC4 (zinc finger)"/>
    <property type="match status" value="1"/>
</dbReference>
<dbReference type="InterPro" id="IPR053114">
    <property type="entry name" value="ATXR5/ATXR6"/>
</dbReference>
<dbReference type="InterPro" id="IPR001214">
    <property type="entry name" value="SET_dom"/>
</dbReference>
<dbReference type="InterPro" id="IPR046341">
    <property type="entry name" value="SET_dom_sf"/>
</dbReference>
<dbReference type="InterPro" id="IPR019786">
    <property type="entry name" value="Zinc_finger_PHD-type_CS"/>
</dbReference>
<dbReference type="InterPro" id="IPR011011">
    <property type="entry name" value="Znf_FYVE_PHD"/>
</dbReference>
<dbReference type="InterPro" id="IPR001965">
    <property type="entry name" value="Znf_PHD"/>
</dbReference>
<dbReference type="InterPro" id="IPR019787">
    <property type="entry name" value="Znf_PHD-finger"/>
</dbReference>
<dbReference type="InterPro" id="IPR013083">
    <property type="entry name" value="Znf_RING/FYVE/PHD"/>
</dbReference>
<dbReference type="PANTHER" id="PTHR48458">
    <property type="entry name" value="SET DOMAIN-CONTAINING PROTEIN"/>
    <property type="match status" value="1"/>
</dbReference>
<dbReference type="PANTHER" id="PTHR48458:SF1">
    <property type="entry name" value="SET DOMAIN-CONTAINING PROTEIN"/>
    <property type="match status" value="1"/>
</dbReference>
<dbReference type="Pfam" id="PF00628">
    <property type="entry name" value="PHD"/>
    <property type="match status" value="1"/>
</dbReference>
<dbReference type="Pfam" id="PF00856">
    <property type="entry name" value="SET"/>
    <property type="match status" value="1"/>
</dbReference>
<dbReference type="SMART" id="SM00249">
    <property type="entry name" value="PHD"/>
    <property type="match status" value="1"/>
</dbReference>
<dbReference type="SMART" id="SM00317">
    <property type="entry name" value="SET"/>
    <property type="match status" value="1"/>
</dbReference>
<dbReference type="SUPFAM" id="SSF57903">
    <property type="entry name" value="FYVE/PHD zinc finger"/>
    <property type="match status" value="1"/>
</dbReference>
<dbReference type="SUPFAM" id="SSF82199">
    <property type="entry name" value="SET domain"/>
    <property type="match status" value="1"/>
</dbReference>
<dbReference type="PROSITE" id="PS50280">
    <property type="entry name" value="SET"/>
    <property type="match status" value="1"/>
</dbReference>
<dbReference type="PROSITE" id="PS01359">
    <property type="entry name" value="ZF_PHD_1"/>
    <property type="match status" value="1"/>
</dbReference>
<dbReference type="PROSITE" id="PS50016">
    <property type="entry name" value="ZF_PHD_2"/>
    <property type="match status" value="1"/>
</dbReference>
<comment type="function">
    <text evidence="2">Histone methyltransferase that specifically monomethylates 'Lys-27' of histone H3 (H3K27me1). Has much higher activity on nucleosomes containing H3.1 than H3.3. Involved in the formation of constitutive heterochromatin and the silencing of heterochromatic elements.</text>
</comment>
<comment type="catalytic activity">
    <reaction evidence="2">
        <text>L-lysyl(27)-[histone H3] + S-adenosyl-L-methionine = N(6)-methyl-L-lysyl(27)-[histone H3] + S-adenosyl-L-homocysteine + H(+)</text>
        <dbReference type="Rhea" id="RHEA:60296"/>
        <dbReference type="Rhea" id="RHEA-COMP:15544"/>
        <dbReference type="Rhea" id="RHEA-COMP:15548"/>
        <dbReference type="ChEBI" id="CHEBI:15378"/>
        <dbReference type="ChEBI" id="CHEBI:29969"/>
        <dbReference type="ChEBI" id="CHEBI:57856"/>
        <dbReference type="ChEBI" id="CHEBI:59789"/>
        <dbReference type="ChEBI" id="CHEBI:61929"/>
        <dbReference type="EC" id="2.1.1.369"/>
    </reaction>
</comment>
<comment type="subunit">
    <text evidence="7">Homodimer.</text>
</comment>
<comment type="subcellular location">
    <subcellularLocation>
        <location evidence="1">Plastid</location>
        <location evidence="1">Chloroplast</location>
    </subcellularLocation>
    <subcellularLocation>
        <location evidence="1">Nucleus</location>
    </subcellularLocation>
</comment>
<comment type="similarity">
    <text evidence="5">Belongs to the class V-like SAM-binding methyltransferase superfamily.</text>
</comment>
<name>ATXR5_RICCO</name>
<organism>
    <name type="scientific">Ricinus communis</name>
    <name type="common">Castor bean</name>
    <dbReference type="NCBI Taxonomy" id="3988"/>
    <lineage>
        <taxon>Eukaryota</taxon>
        <taxon>Viridiplantae</taxon>
        <taxon>Streptophyta</taxon>
        <taxon>Embryophyta</taxon>
        <taxon>Tracheophyta</taxon>
        <taxon>Spermatophyta</taxon>
        <taxon>Magnoliopsida</taxon>
        <taxon>eudicotyledons</taxon>
        <taxon>Gunneridae</taxon>
        <taxon>Pentapetalae</taxon>
        <taxon>rosids</taxon>
        <taxon>fabids</taxon>
        <taxon>Malpighiales</taxon>
        <taxon>Euphorbiaceae</taxon>
        <taxon>Acalyphoideae</taxon>
        <taxon>Acalypheae</taxon>
        <taxon>Ricinus</taxon>
    </lineage>
</organism>
<accession>B9RU15</accession>
<keyword id="KW-0002">3D-structure</keyword>
<keyword id="KW-0150">Chloroplast</keyword>
<keyword id="KW-0156">Chromatin regulator</keyword>
<keyword id="KW-0479">Metal-binding</keyword>
<keyword id="KW-0489">Methyltransferase</keyword>
<keyword id="KW-0539">Nucleus</keyword>
<keyword id="KW-0934">Plastid</keyword>
<keyword id="KW-1185">Reference proteome</keyword>
<keyword id="KW-0949">S-adenosyl-L-methionine</keyword>
<keyword id="KW-0808">Transferase</keyword>
<keyword id="KW-0809">Transit peptide</keyword>
<keyword id="KW-0862">Zinc</keyword>
<keyword id="KW-0863">Zinc-finger</keyword>
<proteinExistence type="evidence at protein level"/>
<sequence>MAPASITTTTTVARRIVGSRRRTKATSPPDSPPPKKLKPISEILAKAQYAVVERADYGDVSCMQCGSGERAEELLLCDKCDKGFHMKCVRPIVVRVPIGSWLCPKCSGQRRVRRLSQRKIIDFFRIQKCNHKTDKCSSPQDIRKHRRRSGSLVYQKRRRRLLPFVSSEDPAQRLKQMGTLASALTELQMEFSDDLTYSSGMAPRSANQARFEEGGMQVLTKEDIETLEQCRAMCKRGDCPPLLVVFDSREGFTVEADGQIKDMTFIAEYTGDVDYIRNREHDDCDSMMTLLLAKDPSKSLVICPDKRGNIARFISGINNHTLDGKKKQNCKCVRYSVNGECRVFLVATRDIAKGERLYYDYNGYEHEYPTQHFV</sequence>
<reference key="1">
    <citation type="journal article" date="2010" name="Nat. Biotechnol.">
        <title>Draft genome sequence of the oilseed species Ricinus communis.</title>
        <authorList>
            <person name="Chan A.P."/>
            <person name="Crabtree J."/>
            <person name="Zhao Q."/>
            <person name="Lorenzi H."/>
            <person name="Orvis J."/>
            <person name="Puiu D."/>
            <person name="Melake-Berhan A."/>
            <person name="Jones K.M."/>
            <person name="Redman J."/>
            <person name="Chen G."/>
            <person name="Cahoon E.B."/>
            <person name="Gedil M."/>
            <person name="Stanke M."/>
            <person name="Haas B.J."/>
            <person name="Wortman J.R."/>
            <person name="Fraser-Liggett C.M."/>
            <person name="Ravel J."/>
            <person name="Rabinowicz P.D."/>
        </authorList>
    </citation>
    <scope>NUCLEOTIDE SEQUENCE [LARGE SCALE GENOMIC DNA]</scope>
    <source>
        <strain>cv. Hale</strain>
    </source>
</reference>
<reference key="2">
    <citation type="journal article" date="2014" name="Science">
        <title>Selective methylation of histone H3 variant H3.1 regulates heterochromatin replication.</title>
        <authorList>
            <person name="Jacob Y."/>
            <person name="Bergamin E."/>
            <person name="Donoghue M.T."/>
            <person name="Mongeon V."/>
            <person name="LeBlanc C."/>
            <person name="Voigt P."/>
            <person name="Underwood C.J."/>
            <person name="Brunzelle J.S."/>
            <person name="Michaels S.D."/>
            <person name="Reinberg D."/>
            <person name="Couture J.F."/>
            <person name="Martienssen R.A."/>
        </authorList>
    </citation>
    <scope>X-RAY CRYSTALLOGRAPHY (2.10 ANGSTROMS) OF 146-374 IN COMPLEX WITH HTR1 PEPTIDE AND S-ADENOSYL-L-METHIONINE</scope>
    <scope>SUBUNIT</scope>
</reference>